<dbReference type="EMBL" id="AJ854042">
    <property type="protein sequence ID" value="CAH69416.1"/>
    <property type="molecule type" value="Genomic_DNA"/>
</dbReference>
<dbReference type="RefSeq" id="YP_001496954.1">
    <property type="nucleotide sequence ID" value="NC_009884.1"/>
</dbReference>
<dbReference type="KEGG" id="vg:5656087"/>
<dbReference type="Proteomes" id="UP000006364">
    <property type="component" value="Genome"/>
</dbReference>
<dbReference type="GO" id="GO:0033644">
    <property type="term" value="C:host cell membrane"/>
    <property type="evidence" value="ECO:0007669"/>
    <property type="project" value="UniProtKB-SubCell"/>
</dbReference>
<dbReference type="GO" id="GO:0016020">
    <property type="term" value="C:membrane"/>
    <property type="evidence" value="ECO:0007669"/>
    <property type="project" value="UniProtKB-KW"/>
</dbReference>
<gene>
    <name type="ORF">ORF159</name>
</gene>
<organismHost>
    <name type="scientific">Acidianus sp. F28</name>
    <dbReference type="NCBI Taxonomy" id="315458"/>
</organismHost>
<evidence type="ECO:0000255" key="1"/>
<evidence type="ECO:0000305" key="2"/>
<name>Y159_AFV2P</name>
<comment type="subcellular location">
    <subcellularLocation>
        <location evidence="2">Host membrane</location>
        <topology evidence="2">Multi-pass membrane protein</topology>
    </subcellularLocation>
</comment>
<organism>
    <name type="scientific">Acidianus filamentous virus 2 (isolate Italy/Pozzuoli)</name>
    <name type="common">AFV-2</name>
    <dbReference type="NCBI Taxonomy" id="654910"/>
    <lineage>
        <taxon>Viruses</taxon>
        <taxon>Adnaviria</taxon>
        <taxon>Zilligvirae</taxon>
        <taxon>Taleaviricota</taxon>
        <taxon>Tokiviricetes</taxon>
        <taxon>Ligamenvirales</taxon>
        <taxon>Lipothrixviridae</taxon>
        <taxon>Deltalipothrixvirus</taxon>
        <taxon>Acidianus filamentous virus 2</taxon>
    </lineage>
</organism>
<protein>
    <recommendedName>
        <fullName>Putative transmembrane protein ORF159</fullName>
    </recommendedName>
</protein>
<feature type="chain" id="PRO_0000384512" description="Putative transmembrane protein ORF159">
    <location>
        <begin position="1"/>
        <end position="159"/>
    </location>
</feature>
<feature type="transmembrane region" description="Helical" evidence="1">
    <location>
        <begin position="20"/>
        <end position="40"/>
    </location>
</feature>
<feature type="transmembrane region" description="Helical" evidence="1">
    <location>
        <begin position="59"/>
        <end position="79"/>
    </location>
</feature>
<feature type="short sequence motif" description="Cell attachment site" evidence="1">
    <location>
        <begin position="106"/>
        <end position="108"/>
    </location>
</feature>
<reference key="1">
    <citation type="journal article" date="2005" name="J. Bacteriol.">
        <title>Structure and genome organization of AFV2, a novel archaeal lipothrixvirus with unusual terminal and core structures.</title>
        <authorList>
            <person name="Haring M."/>
            <person name="Vestergaard G."/>
            <person name="Brugger K."/>
            <person name="Rachel R."/>
            <person name="Garrett R.A."/>
            <person name="Prangishvili D."/>
        </authorList>
    </citation>
    <scope>NUCLEOTIDE SEQUENCE [GENOMIC DNA]</scope>
</reference>
<proteinExistence type="predicted"/>
<accession>Q573E0</accession>
<keyword id="KW-1043">Host membrane</keyword>
<keyword id="KW-0472">Membrane</keyword>
<keyword id="KW-1185">Reference proteome</keyword>
<keyword id="KW-0812">Transmembrane</keyword>
<keyword id="KW-1133">Transmembrane helix</keyword>
<sequence length="159" mass="16708">MTTPLCYSSPVNTPLSPSLLLLSLLLLLSTICGVLPLSLFCCGIGTGITLFNFDDTSDIIAVDIASAICFIIFCNGFCCCCCSGDPPYASSTTSLAICDGMLSLLRGDPPPVAVTYAPIFIAFCMHNSMSLIESKSGLTAFLTRVTMTSSMLPFSSIIS</sequence>